<proteinExistence type="inferred from homology"/>
<evidence type="ECO:0000255" key="1">
    <source>
        <dbReference type="HAMAP-Rule" id="MF_00048"/>
    </source>
</evidence>
<comment type="similarity">
    <text evidence="1">Belongs to the UPF0102 family.</text>
</comment>
<dbReference type="EMBL" id="CP000113">
    <property type="protein sequence ID" value="ABF92414.1"/>
    <property type="molecule type" value="Genomic_DNA"/>
</dbReference>
<dbReference type="RefSeq" id="WP_011553580.1">
    <property type="nucleotide sequence ID" value="NC_008095.1"/>
</dbReference>
<dbReference type="SMR" id="Q1D6H9"/>
<dbReference type="STRING" id="246197.MXAN_3551"/>
<dbReference type="EnsemblBacteria" id="ABF92414">
    <property type="protein sequence ID" value="ABF92414"/>
    <property type="gene ID" value="MXAN_3551"/>
</dbReference>
<dbReference type="GeneID" id="41360896"/>
<dbReference type="KEGG" id="mxa:MXAN_3551"/>
<dbReference type="eggNOG" id="COG0792">
    <property type="taxonomic scope" value="Bacteria"/>
</dbReference>
<dbReference type="HOGENOM" id="CLU_115353_2_3_7"/>
<dbReference type="OrthoDB" id="9794876at2"/>
<dbReference type="Proteomes" id="UP000002402">
    <property type="component" value="Chromosome"/>
</dbReference>
<dbReference type="GO" id="GO:0003676">
    <property type="term" value="F:nucleic acid binding"/>
    <property type="evidence" value="ECO:0007669"/>
    <property type="project" value="InterPro"/>
</dbReference>
<dbReference type="Gene3D" id="3.40.1350.10">
    <property type="match status" value="1"/>
</dbReference>
<dbReference type="HAMAP" id="MF_00048">
    <property type="entry name" value="UPF0102"/>
    <property type="match status" value="1"/>
</dbReference>
<dbReference type="InterPro" id="IPR011335">
    <property type="entry name" value="Restrct_endonuc-II-like"/>
</dbReference>
<dbReference type="InterPro" id="IPR011856">
    <property type="entry name" value="tRNA_endonuc-like_dom_sf"/>
</dbReference>
<dbReference type="InterPro" id="IPR003509">
    <property type="entry name" value="UPF0102_YraN-like"/>
</dbReference>
<dbReference type="NCBIfam" id="NF009150">
    <property type="entry name" value="PRK12497.1-3"/>
    <property type="match status" value="1"/>
</dbReference>
<dbReference type="NCBIfam" id="NF009154">
    <property type="entry name" value="PRK12497.3-3"/>
    <property type="match status" value="1"/>
</dbReference>
<dbReference type="NCBIfam" id="TIGR00252">
    <property type="entry name" value="YraN family protein"/>
    <property type="match status" value="1"/>
</dbReference>
<dbReference type="PANTHER" id="PTHR34039">
    <property type="entry name" value="UPF0102 PROTEIN YRAN"/>
    <property type="match status" value="1"/>
</dbReference>
<dbReference type="PANTHER" id="PTHR34039:SF1">
    <property type="entry name" value="UPF0102 PROTEIN YRAN"/>
    <property type="match status" value="1"/>
</dbReference>
<dbReference type="Pfam" id="PF02021">
    <property type="entry name" value="UPF0102"/>
    <property type="match status" value="1"/>
</dbReference>
<dbReference type="SUPFAM" id="SSF52980">
    <property type="entry name" value="Restriction endonuclease-like"/>
    <property type="match status" value="1"/>
</dbReference>
<feature type="chain" id="PRO_1000057336" description="UPF0102 protein MXAN_3551">
    <location>
        <begin position="1"/>
        <end position="126"/>
    </location>
</feature>
<protein>
    <recommendedName>
        <fullName evidence="1">UPF0102 protein MXAN_3551</fullName>
    </recommendedName>
</protein>
<reference key="1">
    <citation type="journal article" date="2006" name="Proc. Natl. Acad. Sci. U.S.A.">
        <title>Evolution of sensory complexity recorded in a myxobacterial genome.</title>
        <authorList>
            <person name="Goldman B.S."/>
            <person name="Nierman W.C."/>
            <person name="Kaiser D."/>
            <person name="Slater S.C."/>
            <person name="Durkin A.S."/>
            <person name="Eisen J.A."/>
            <person name="Ronning C.M."/>
            <person name="Barbazuk W.B."/>
            <person name="Blanchard M."/>
            <person name="Field C."/>
            <person name="Halling C."/>
            <person name="Hinkle G."/>
            <person name="Iartchuk O."/>
            <person name="Kim H.S."/>
            <person name="Mackenzie C."/>
            <person name="Madupu R."/>
            <person name="Miller N."/>
            <person name="Shvartsbeyn A."/>
            <person name="Sullivan S.A."/>
            <person name="Vaudin M."/>
            <person name="Wiegand R."/>
            <person name="Kaplan H.B."/>
        </authorList>
    </citation>
    <scope>NUCLEOTIDE SEQUENCE [LARGE SCALE GENOMIC DNA]</scope>
    <source>
        <strain>DK1622</strain>
    </source>
</reference>
<organism>
    <name type="scientific">Myxococcus xanthus (strain DK1622)</name>
    <dbReference type="NCBI Taxonomy" id="246197"/>
    <lineage>
        <taxon>Bacteria</taxon>
        <taxon>Pseudomonadati</taxon>
        <taxon>Myxococcota</taxon>
        <taxon>Myxococcia</taxon>
        <taxon>Myxococcales</taxon>
        <taxon>Cystobacterineae</taxon>
        <taxon>Myxococcaceae</taxon>
        <taxon>Myxococcus</taxon>
    </lineage>
</organism>
<sequence length="126" mass="14417">MRRAAPAERREYGNAGEEAAVRFLEAQGWRVRDRNWTCRFGELDVVAERDDLVCFVEVRMRSTATWGDPSHSVSFAKQRRVVKAALRYLFAHDLRGRMFRFDVISVVGRGERATVDHIPGAFDAGM</sequence>
<gene>
    <name type="ordered locus">MXAN_3551</name>
</gene>
<name>Y3551_MYXXD</name>
<accession>Q1D6H9</accession>
<keyword id="KW-1185">Reference proteome</keyword>